<dbReference type="EC" id="3.4.19.12" evidence="1"/>
<dbReference type="EMBL" id="BC092574">
    <property type="protein sequence ID" value="AAH92574.1"/>
    <property type="molecule type" value="mRNA"/>
</dbReference>
<dbReference type="RefSeq" id="NP_001015015.1">
    <property type="nucleotide sequence ID" value="NM_001015015.1"/>
</dbReference>
<dbReference type="SMR" id="Q569C3"/>
<dbReference type="FunCoup" id="Q569C3">
    <property type="interactions" value="3417"/>
</dbReference>
<dbReference type="STRING" id="10116.ENSRNOP00000010935"/>
<dbReference type="MEROPS" id="C19.019"/>
<dbReference type="iPTMnet" id="Q569C3"/>
<dbReference type="PhosphoSitePlus" id="Q569C3"/>
<dbReference type="PaxDb" id="10116-ENSRNOP00000010935"/>
<dbReference type="Ensembl" id="ENSRNOT00000010933.7">
    <property type="protein sequence ID" value="ENSRNOP00000010935.4"/>
    <property type="gene ID" value="ENSRNOG00000007890.7"/>
</dbReference>
<dbReference type="GeneID" id="313387"/>
<dbReference type="KEGG" id="rno:313387"/>
<dbReference type="UCSC" id="RGD:1306461">
    <property type="organism name" value="rat"/>
</dbReference>
<dbReference type="AGR" id="RGD:1306461"/>
<dbReference type="CTD" id="7398"/>
<dbReference type="RGD" id="1306461">
    <property type="gene designation" value="Usp1"/>
</dbReference>
<dbReference type="eggNOG" id="KOG1864">
    <property type="taxonomic scope" value="Eukaryota"/>
</dbReference>
<dbReference type="GeneTree" id="ENSGT00910000144243"/>
<dbReference type="HOGENOM" id="CLU_019874_0_0_1"/>
<dbReference type="InParanoid" id="Q569C3"/>
<dbReference type="OMA" id="MNTTCHG"/>
<dbReference type="OrthoDB" id="10062454at2759"/>
<dbReference type="PhylomeDB" id="Q569C3"/>
<dbReference type="TreeFam" id="TF331057"/>
<dbReference type="Reactome" id="R-RNO-110314">
    <property type="pathway name" value="Recognition of DNA damage by PCNA-containing replication complex"/>
</dbReference>
<dbReference type="Reactome" id="R-RNO-6783310">
    <property type="pathway name" value="Fanconi Anemia Pathway"/>
</dbReference>
<dbReference type="PRO" id="PR:Q569C3"/>
<dbReference type="Proteomes" id="UP000002494">
    <property type="component" value="Chromosome 5"/>
</dbReference>
<dbReference type="Bgee" id="ENSRNOG00000007890">
    <property type="expression patterns" value="Expressed in testis and 20 other cell types or tissues"/>
</dbReference>
<dbReference type="ExpressionAtlas" id="Q569C3">
    <property type="expression patterns" value="baseline and differential"/>
</dbReference>
<dbReference type="GO" id="GO:0005829">
    <property type="term" value="C:cytosol"/>
    <property type="evidence" value="ECO:0000318"/>
    <property type="project" value="GO_Central"/>
</dbReference>
<dbReference type="GO" id="GO:0005654">
    <property type="term" value="C:nucleoplasm"/>
    <property type="evidence" value="ECO:0007669"/>
    <property type="project" value="Ensembl"/>
</dbReference>
<dbReference type="GO" id="GO:0005634">
    <property type="term" value="C:nucleus"/>
    <property type="evidence" value="ECO:0000250"/>
    <property type="project" value="UniProtKB"/>
</dbReference>
<dbReference type="GO" id="GO:0004843">
    <property type="term" value="F:cysteine-type deubiquitinase activity"/>
    <property type="evidence" value="ECO:0000250"/>
    <property type="project" value="UniProtKB"/>
</dbReference>
<dbReference type="GO" id="GO:0004197">
    <property type="term" value="F:cysteine-type endopeptidase activity"/>
    <property type="evidence" value="ECO:0007669"/>
    <property type="project" value="InterPro"/>
</dbReference>
<dbReference type="GO" id="GO:0008233">
    <property type="term" value="F:peptidase activity"/>
    <property type="evidence" value="ECO:0000266"/>
    <property type="project" value="RGD"/>
</dbReference>
<dbReference type="GO" id="GO:0006281">
    <property type="term" value="P:DNA repair"/>
    <property type="evidence" value="ECO:0007669"/>
    <property type="project" value="UniProtKB-KW"/>
</dbReference>
<dbReference type="GO" id="GO:0035520">
    <property type="term" value="P:monoubiquitinated protein deubiquitination"/>
    <property type="evidence" value="ECO:0000250"/>
    <property type="project" value="UniProtKB"/>
</dbReference>
<dbReference type="GO" id="GO:0046427">
    <property type="term" value="P:positive regulation of receptor signaling pathway via JAK-STAT"/>
    <property type="evidence" value="ECO:0000266"/>
    <property type="project" value="RGD"/>
</dbReference>
<dbReference type="GO" id="GO:0016579">
    <property type="term" value="P:protein deubiquitination"/>
    <property type="evidence" value="ECO:0000250"/>
    <property type="project" value="UniProtKB"/>
</dbReference>
<dbReference type="GO" id="GO:0006508">
    <property type="term" value="P:proteolysis"/>
    <property type="evidence" value="ECO:0007669"/>
    <property type="project" value="UniProtKB-KW"/>
</dbReference>
<dbReference type="GO" id="GO:0006282">
    <property type="term" value="P:regulation of DNA repair"/>
    <property type="evidence" value="ECO:0000250"/>
    <property type="project" value="UniProtKB"/>
</dbReference>
<dbReference type="GO" id="GO:0031647">
    <property type="term" value="P:regulation of protein stability"/>
    <property type="evidence" value="ECO:0000318"/>
    <property type="project" value="GO_Central"/>
</dbReference>
<dbReference type="GO" id="GO:0009411">
    <property type="term" value="P:response to UV"/>
    <property type="evidence" value="ECO:0000250"/>
    <property type="project" value="UniProtKB"/>
</dbReference>
<dbReference type="GO" id="GO:0001501">
    <property type="term" value="P:skeletal system development"/>
    <property type="evidence" value="ECO:0000266"/>
    <property type="project" value="RGD"/>
</dbReference>
<dbReference type="CDD" id="cd02671">
    <property type="entry name" value="Peptidase_C19O"/>
    <property type="match status" value="1"/>
</dbReference>
<dbReference type="FunFam" id="3.90.70.10:FF:000053">
    <property type="entry name" value="Ubiquitin carboxyl-terminal hydrolase 1"/>
    <property type="match status" value="1"/>
</dbReference>
<dbReference type="FunFam" id="3.90.70.10:FF:000077">
    <property type="entry name" value="Ubiquitin carboxyl-terminal hydrolase 1"/>
    <property type="match status" value="1"/>
</dbReference>
<dbReference type="Gene3D" id="3.90.70.10">
    <property type="entry name" value="Cysteine proteinases"/>
    <property type="match status" value="2"/>
</dbReference>
<dbReference type="InterPro" id="IPR038765">
    <property type="entry name" value="Papain-like_cys_pep_sf"/>
</dbReference>
<dbReference type="InterPro" id="IPR050164">
    <property type="entry name" value="Peptidase_C19"/>
</dbReference>
<dbReference type="InterPro" id="IPR001394">
    <property type="entry name" value="Peptidase_C19_UCH"/>
</dbReference>
<dbReference type="InterPro" id="IPR033815">
    <property type="entry name" value="USP1"/>
</dbReference>
<dbReference type="InterPro" id="IPR018200">
    <property type="entry name" value="USP_CS"/>
</dbReference>
<dbReference type="InterPro" id="IPR028889">
    <property type="entry name" value="USP_dom"/>
</dbReference>
<dbReference type="PANTHER" id="PTHR24006">
    <property type="entry name" value="UBIQUITIN CARBOXYL-TERMINAL HYDROLASE"/>
    <property type="match status" value="1"/>
</dbReference>
<dbReference type="PANTHER" id="PTHR24006:SF905">
    <property type="entry name" value="UBIQUITIN CARBOXYL-TERMINAL HYDROLASE 1"/>
    <property type="match status" value="1"/>
</dbReference>
<dbReference type="Pfam" id="PF00443">
    <property type="entry name" value="UCH"/>
    <property type="match status" value="1"/>
</dbReference>
<dbReference type="SUPFAM" id="SSF54001">
    <property type="entry name" value="Cysteine proteinases"/>
    <property type="match status" value="1"/>
</dbReference>
<dbReference type="PROSITE" id="PS00972">
    <property type="entry name" value="USP_1"/>
    <property type="match status" value="1"/>
</dbReference>
<dbReference type="PROSITE" id="PS00973">
    <property type="entry name" value="USP_2"/>
    <property type="match status" value="1"/>
</dbReference>
<dbReference type="PROSITE" id="PS50235">
    <property type="entry name" value="USP_3"/>
    <property type="match status" value="1"/>
</dbReference>
<protein>
    <recommendedName>
        <fullName>Ubiquitin carboxyl-terminal hydrolase 1</fullName>
        <ecNumber evidence="1">3.4.19.12</ecNumber>
    </recommendedName>
    <alternativeName>
        <fullName>Deubiquitinating enzyme 1</fullName>
    </alternativeName>
    <alternativeName>
        <fullName>Ubiquitin thioesterase 1</fullName>
    </alternativeName>
    <alternativeName>
        <fullName>Ubiquitin-specific-processing protease 1</fullName>
    </alternativeName>
    <component>
        <recommendedName>
            <fullName evidence="1">Ubiquitin carboxyl-terminal hydrolase 1, N-terminal fragment</fullName>
        </recommendedName>
    </component>
</protein>
<keyword id="KW-0068">Autocatalytic cleavage</keyword>
<keyword id="KW-0227">DNA damage</keyword>
<keyword id="KW-0234">DNA repair</keyword>
<keyword id="KW-0378">Hydrolase</keyword>
<keyword id="KW-0539">Nucleus</keyword>
<keyword id="KW-0597">Phosphoprotein</keyword>
<keyword id="KW-0645">Protease</keyword>
<keyword id="KW-1185">Reference proteome</keyword>
<keyword id="KW-0788">Thiol protease</keyword>
<keyword id="KW-0832">Ubl conjugation</keyword>
<keyword id="KW-0833">Ubl conjugation pathway</keyword>
<gene>
    <name evidence="7 8" type="primary">Usp1</name>
</gene>
<organism>
    <name type="scientific">Rattus norvegicus</name>
    <name type="common">Rat</name>
    <dbReference type="NCBI Taxonomy" id="10116"/>
    <lineage>
        <taxon>Eukaryota</taxon>
        <taxon>Metazoa</taxon>
        <taxon>Chordata</taxon>
        <taxon>Craniata</taxon>
        <taxon>Vertebrata</taxon>
        <taxon>Euteleostomi</taxon>
        <taxon>Mammalia</taxon>
        <taxon>Eutheria</taxon>
        <taxon>Euarchontoglires</taxon>
        <taxon>Glires</taxon>
        <taxon>Rodentia</taxon>
        <taxon>Myomorpha</taxon>
        <taxon>Muroidea</taxon>
        <taxon>Muridae</taxon>
        <taxon>Murinae</taxon>
        <taxon>Rattus</taxon>
    </lineage>
</organism>
<name>UBP1_RAT</name>
<accession>Q569C3</accession>
<feature type="chain" id="PRO_0000306288" description="Ubiquitin carboxyl-terminal hydrolase 1">
    <location>
        <begin position="1"/>
        <end position="784"/>
    </location>
</feature>
<feature type="chain" id="PRO_0000453164" description="Ubiquitin carboxyl-terminal hydrolase 1, N-terminal fragment" evidence="1">
    <location>
        <begin position="1"/>
        <end position="670"/>
    </location>
</feature>
<feature type="domain" description="USP">
    <location>
        <begin position="81"/>
        <end position="784"/>
    </location>
</feature>
<feature type="region of interest" description="Disordered" evidence="6">
    <location>
        <begin position="1"/>
        <end position="21"/>
    </location>
</feature>
<feature type="region of interest" description="Disordered" evidence="6">
    <location>
        <begin position="33"/>
        <end position="54"/>
    </location>
</feature>
<feature type="region of interest" description="Disordered" evidence="6">
    <location>
        <begin position="232"/>
        <end position="341"/>
    </location>
</feature>
<feature type="region of interest" description="Disordered" evidence="6">
    <location>
        <begin position="363"/>
        <end position="411"/>
    </location>
</feature>
<feature type="region of interest" description="Disordered" evidence="6">
    <location>
        <begin position="686"/>
        <end position="723"/>
    </location>
</feature>
<feature type="compositionally biased region" description="Polar residues" evidence="6">
    <location>
        <begin position="7"/>
        <end position="16"/>
    </location>
</feature>
<feature type="compositionally biased region" description="Basic and acidic residues" evidence="6">
    <location>
        <begin position="232"/>
        <end position="243"/>
    </location>
</feature>
<feature type="compositionally biased region" description="Basic and acidic residues" evidence="6">
    <location>
        <begin position="252"/>
        <end position="264"/>
    </location>
</feature>
<feature type="compositionally biased region" description="Polar residues" evidence="6">
    <location>
        <begin position="389"/>
        <end position="407"/>
    </location>
</feature>
<feature type="compositionally biased region" description="Polar residues" evidence="6">
    <location>
        <begin position="694"/>
        <end position="709"/>
    </location>
</feature>
<feature type="active site" description="Nucleophile" evidence="4 5">
    <location>
        <position position="90"/>
    </location>
</feature>
<feature type="active site" description="Proton acceptor" evidence="4 5">
    <location>
        <position position="593"/>
    </location>
</feature>
<feature type="site" description="Cleavage; by autolysis" evidence="1">
    <location>
        <begin position="670"/>
        <end position="671"/>
    </location>
</feature>
<feature type="modified residue" description="Phosphoserine" evidence="1">
    <location>
        <position position="16"/>
    </location>
</feature>
<feature type="modified residue" description="Phosphoserine" evidence="1">
    <location>
        <position position="42"/>
    </location>
</feature>
<feature type="modified residue" description="Phosphoserine" evidence="1">
    <location>
        <position position="67"/>
    </location>
</feature>
<feature type="modified residue" description="Phosphoserine" evidence="9">
    <location>
        <position position="475"/>
    </location>
</feature>
<feature type="modified residue" description="Phosphoserine" evidence="2">
    <location>
        <position position="767"/>
    </location>
</feature>
<sequence length="784" mass="87329">MPGVIPSESNGLSRGSPSKKNRLSLKFFQKKETKRALDFTDSQEDEEKASEYRGSEIDQVVPAAQSSPVSCEKRENLLPFVGLNNLGNTCYLNSILQVLYFCPGFKAGVKHLFNIISRKKEALKDDSIQKDKGSCKEDPLASYELICSLQSLIISVEQLQASFLLNPEKYTDELATQPRRLLNTLRELNPMYEGYLQHDAQEVLQCILGNIQETCQLLKKEEIKNLTEFSSKVEEKSLQKEETGGISSTETDSTRNLDDLKEQLPKGNWKRKSDGESGNMKKKVKLSRESQPLEENQRQTRSKRKATGDTLEASPKIIPKCVSENESAKPSQKKSKVKINWLKPATKQPSILSKFCSLGKITTNQRSKGQPKVNEGDLEEDLEKDGRDNTVNGSGPASPGSSVTPVDSSEAKSINKGAEQIGFELVEKLFQGQLVLRTRCLECESLTERREDFQDISVPVQEDELSKVEESSEISPEPKTEMKTLRWAISQFASVERIVGEDKYFCENCHHYTEAERSLLFDKMPEVITIHLKCFAASGLEFDCYGGGLSKINTPLLTPLKLSLEEWSTKPTNDSYGLFAVVMHSGITISSGHYTASVKVTDLNSLELDKGNFVVDQMCEIGKPEPLNEEEARGTAENYDDEVSIRVGGNAQPSKVLNKKNVEGIGLLGGQKSKADYELCSKASNPEKVVGTPFTDSRNSETNDTNGTQESDRSKESSDQTGINVSGLENKISYVVQSLKEYEGKWLLFDDSEVKVTEEKDFLNSLSPSTSPTSTPYLLFYKKL</sequence>
<comment type="function">
    <text evidence="1">Negative regulator of DNA damage repair which specifically deubiquitinates monoubiquitinated FANCD2. Also involved in PCNA-mediated translesion synthesis (TLS) by deubiquitinating monoubiquitinated PCNA. Has almost no deubiquitinating activity by itself and requires the interaction with WDR48 to have a high activity.</text>
</comment>
<comment type="catalytic activity">
    <reaction evidence="1">
        <text>Thiol-dependent hydrolysis of ester, thioester, amide, peptide and isopeptide bonds formed by the C-terminal Gly of ubiquitin (a 76-residue protein attached to proteins as an intracellular targeting signal).</text>
        <dbReference type="EC" id="3.4.19.12"/>
    </reaction>
</comment>
<comment type="subunit">
    <text evidence="1">Interacts with FANCD2 and PCNA. Interacts with WDR48. Interacts with ATAD5; the interaction regulates USP1-mediated PCNA deubiquitination.</text>
</comment>
<comment type="subcellular location">
    <subcellularLocation>
        <location evidence="1">Nucleus</location>
    </subcellularLocation>
</comment>
<comment type="PTM">
    <text evidence="1">Autocatalytic cleavage of USP1 following UV irradiation inactivates it, leading to an increase in ubiquitinated PCNA, recruitment of POLH and translesion synthesis.</text>
</comment>
<comment type="PTM">
    <molecule>Ubiquitin carboxyl-terminal hydrolase 1, N-terminal fragment</molecule>
    <text evidence="1">Ubiquitinated by the CRL2(KLHDC2) complex following autocatalytic cleavage, leading to its degradation: the CRL2(KLHDC2) complex recognizes the diglycine (Gly-Gly) at the C-terminus.</text>
</comment>
<comment type="similarity">
    <text evidence="3">Belongs to the peptidase C19 family.</text>
</comment>
<reference evidence="7" key="1">
    <citation type="journal article" date="2004" name="Genome Res.">
        <title>The status, quality, and expansion of the NIH full-length cDNA project: the Mammalian Gene Collection (MGC).</title>
        <authorList>
            <consortium name="The MGC Project Team"/>
        </authorList>
    </citation>
    <scope>NUCLEOTIDE SEQUENCE [LARGE SCALE MRNA]</scope>
    <source>
        <strain>Brown Norway</strain>
        <tissue evidence="7">Testis</tissue>
    </source>
</reference>
<reference key="2">
    <citation type="journal article" date="2012" name="Nat. Commun.">
        <title>Quantitative maps of protein phosphorylation sites across 14 different rat organs and tissues.</title>
        <authorList>
            <person name="Lundby A."/>
            <person name="Secher A."/>
            <person name="Lage K."/>
            <person name="Nordsborg N.B."/>
            <person name="Dmytriyev A."/>
            <person name="Lundby C."/>
            <person name="Olsen J.V."/>
        </authorList>
    </citation>
    <scope>PHOSPHORYLATION [LARGE SCALE ANALYSIS] AT SER-475</scope>
    <scope>IDENTIFICATION BY MASS SPECTROMETRY [LARGE SCALE ANALYSIS]</scope>
</reference>
<proteinExistence type="evidence at protein level"/>
<evidence type="ECO:0000250" key="1">
    <source>
        <dbReference type="UniProtKB" id="O94782"/>
    </source>
</evidence>
<evidence type="ECO:0000250" key="2">
    <source>
        <dbReference type="UniProtKB" id="Q8BJQ2"/>
    </source>
</evidence>
<evidence type="ECO:0000255" key="3"/>
<evidence type="ECO:0000255" key="4">
    <source>
        <dbReference type="PROSITE-ProRule" id="PRU10092"/>
    </source>
</evidence>
<evidence type="ECO:0000255" key="5">
    <source>
        <dbReference type="PROSITE-ProRule" id="PRU10093"/>
    </source>
</evidence>
<evidence type="ECO:0000256" key="6">
    <source>
        <dbReference type="SAM" id="MobiDB-lite"/>
    </source>
</evidence>
<evidence type="ECO:0000312" key="7">
    <source>
        <dbReference type="EMBL" id="AAH92574.1"/>
    </source>
</evidence>
<evidence type="ECO:0000312" key="8">
    <source>
        <dbReference type="RGD" id="1306461"/>
    </source>
</evidence>
<evidence type="ECO:0007744" key="9">
    <source>
    </source>
</evidence>